<accession>P09025</accession>
<proteinExistence type="evidence at protein level"/>
<comment type="function">
    <text>Sequence-specific transcription factor which is part of a developmental regulatory system that provides cells with specific positional identities on the anterior-posterior axis.</text>
</comment>
<comment type="subunit">
    <text evidence="1 4">Interacts with HOMEZ (By similarity). Forms a DNA-binding heterodimer with transcription factor PBX1 (PubMed:7791786).</text>
</comment>
<comment type="subcellular location">
    <subcellularLocation>
        <location>Nucleus</location>
    </subcellularLocation>
</comment>
<comment type="developmental stage">
    <text>Initially found in all tissues of the posterior region in 8.5 and 9.5 dpc. Embryos, it eventually become specifically located in neural tissue.</text>
</comment>
<comment type="similarity">
    <text evidence="5">Belongs to the Antp homeobox family.</text>
</comment>
<keyword id="KW-0217">Developmental protein</keyword>
<keyword id="KW-0238">DNA-binding</keyword>
<keyword id="KW-0371">Homeobox</keyword>
<keyword id="KW-0539">Nucleus</keyword>
<keyword id="KW-1185">Reference proteome</keyword>
<keyword id="KW-0804">Transcription</keyword>
<keyword id="KW-0805">Transcription regulation</keyword>
<gene>
    <name type="primary">Hoxc8</name>
    <name type="synonym">Hox-3.1</name>
    <name type="synonym">Hoxc-8</name>
</gene>
<sequence>MSSYFVNPLFSKYKGGESLEPAYYDCRFPQSVGRSHALVYGPGGSAPGFQHASHHVQDFFHHGTSGISNSGYQQNPCSLSCHGDASKFYGYEALPRQSLYGAQQEASVVQYPDCKSSANTNSSEGQGHLNQNSSPSLMFPWMRPHAPGRRSGRQTYSRYQTLELEKEFLFNPYLTRKRRIEVSHALGLTERQVKIWFQNRRMKWKKENNKDKLPGARDEEKVEEEGNEEEEKEEEEKEENKD</sequence>
<reference key="1">
    <citation type="journal article" date="1988" name="Genes Dev.">
        <title>Pattern of transcription of the homeo gene Hox-3.1 in the mouse embryo.</title>
        <authorList>
            <person name="le Mouellic H."/>
            <person name="Condamine H."/>
            <person name="Brulet P."/>
        </authorList>
    </citation>
    <scope>NUCLEOTIDE SEQUENCE [MRNA]</scope>
</reference>
<reference key="2">
    <citation type="journal article" date="1988" name="EMBO J.">
        <title>Primary structure and developmental expression pattern of Hox 3.1, a member of the murine Hox 3 homeobox gene cluster.</title>
        <authorList>
            <person name="Breier G."/>
            <person name="Dressler G.R."/>
            <person name="Gruss P."/>
        </authorList>
    </citation>
    <scope>NUCLEOTIDE SEQUENCE [MRNA]</scope>
</reference>
<reference key="3">
    <citation type="journal article" date="1990" name="Proc. Natl. Acad. Sci. U.S.A.">
        <title>Structural analysis of the Hox-3.1 transcription unit and the Hox-3.2-Hox-3.1 intergenic region.</title>
        <authorList>
            <person name="Awgulewitsch A."/>
            <person name="Bieberich C."/>
            <person name="Bogarad L."/>
            <person name="Shashikant C."/>
            <person name="Ruddle F.H."/>
        </authorList>
    </citation>
    <scope>NUCLEOTIDE SEQUENCE [GENOMIC DNA]</scope>
    <source>
        <strain>CD-1</strain>
    </source>
</reference>
<reference key="4">
    <citation type="journal article" date="1986" name="Nature">
        <title>Spatial restriction in expression of a mouse homoeo box locus within the central nervous system.</title>
        <authorList>
            <person name="Awgulewitsch A."/>
            <person name="Utset M.F."/>
            <person name="Hart C.P."/>
            <person name="McGinnis W."/>
            <person name="Ruddle F.H."/>
        </authorList>
    </citation>
    <scope>NUCLEOTIDE SEQUENCE [GENOMIC DNA] OF 147-216</scope>
</reference>
<reference key="5">
    <citation type="journal article" date="1986" name="EMBO J.">
        <title>Sequential expression of murine homeo box genes during F9 EC cell differentiation.</title>
        <authorList>
            <person name="Breier G."/>
            <person name="Bucan M."/>
            <person name="Francke U."/>
            <person name="Colberg-Poley A.M."/>
            <person name="Gruss P."/>
        </authorList>
    </citation>
    <scope>NUCLEOTIDE SEQUENCE OF 149-215</scope>
</reference>
<reference key="6">
    <citation type="journal article" date="1995" name="Mol. Cell. Biol.">
        <title>Both Pbx1 and E2A-Pbx1 bind the DNA motif ATCAATCAA cooperatively with the products of multiple murine Hox genes, some of which are themselves oncogenes.</title>
        <authorList>
            <person name="Lu Q."/>
            <person name="Knoepfler P.S."/>
            <person name="Scheele J."/>
            <person name="Wright D.D."/>
            <person name="Kamps M.P."/>
        </authorList>
    </citation>
    <scope>INTERACTION WITH PBX1</scope>
</reference>
<name>HXC8_MOUSE</name>
<protein>
    <recommendedName>
        <fullName>Homeobox protein Hox-C8</fullName>
    </recommendedName>
    <alternativeName>
        <fullName>Homeobox protein Hox-3.1</fullName>
    </alternativeName>
    <alternativeName>
        <fullName>Homeobox protein M31</fullName>
    </alternativeName>
</protein>
<evidence type="ECO:0000250" key="1">
    <source>
        <dbReference type="UniProtKB" id="P31273"/>
    </source>
</evidence>
<evidence type="ECO:0000255" key="2">
    <source>
        <dbReference type="PROSITE-ProRule" id="PRU00108"/>
    </source>
</evidence>
<evidence type="ECO:0000256" key="3">
    <source>
        <dbReference type="SAM" id="MobiDB-lite"/>
    </source>
</evidence>
<evidence type="ECO:0000269" key="4">
    <source>
    </source>
</evidence>
<evidence type="ECO:0000305" key="5"/>
<organism>
    <name type="scientific">Mus musculus</name>
    <name type="common">Mouse</name>
    <dbReference type="NCBI Taxonomy" id="10090"/>
    <lineage>
        <taxon>Eukaryota</taxon>
        <taxon>Metazoa</taxon>
        <taxon>Chordata</taxon>
        <taxon>Craniata</taxon>
        <taxon>Vertebrata</taxon>
        <taxon>Euteleostomi</taxon>
        <taxon>Mammalia</taxon>
        <taxon>Eutheria</taxon>
        <taxon>Euarchontoglires</taxon>
        <taxon>Glires</taxon>
        <taxon>Rodentia</taxon>
        <taxon>Myomorpha</taxon>
        <taxon>Muroidea</taxon>
        <taxon>Muridae</taxon>
        <taxon>Murinae</taxon>
        <taxon>Mus</taxon>
        <taxon>Mus</taxon>
    </lineage>
</organism>
<feature type="chain" id="PRO_0000200181" description="Homeobox protein Hox-C8">
    <location>
        <begin position="1"/>
        <end position="242"/>
    </location>
</feature>
<feature type="DNA-binding region" description="Homeobox" evidence="2">
    <location>
        <begin position="149"/>
        <end position="208"/>
    </location>
</feature>
<feature type="region of interest" description="Disordered" evidence="3">
    <location>
        <begin position="114"/>
        <end position="154"/>
    </location>
</feature>
<feature type="region of interest" description="Disordered" evidence="3">
    <location>
        <begin position="206"/>
        <end position="242"/>
    </location>
</feature>
<feature type="short sequence motif" description="Antp-type hexapeptide">
    <location>
        <begin position="138"/>
        <end position="143"/>
    </location>
</feature>
<feature type="compositionally biased region" description="Polar residues" evidence="3">
    <location>
        <begin position="116"/>
        <end position="136"/>
    </location>
</feature>
<feature type="compositionally biased region" description="Basic and acidic residues" evidence="3">
    <location>
        <begin position="206"/>
        <end position="220"/>
    </location>
</feature>
<feature type="compositionally biased region" description="Acidic residues" evidence="3">
    <location>
        <begin position="221"/>
        <end position="242"/>
    </location>
</feature>
<feature type="sequence conflict" description="In Ref. 4; CAA27294." evidence="5" ref="4">
    <original>S</original>
    <variation>T</variation>
    <location>
        <position position="151"/>
    </location>
</feature>
<feature type="sequence conflict" description="In Ref. 4; CAA27294." evidence="5" ref="4">
    <original>E</original>
    <variation>Q</variation>
    <location>
        <position position="181"/>
    </location>
</feature>
<dbReference type="EMBL" id="X07439">
    <property type="protein sequence ID" value="CAA30319.1"/>
    <property type="molecule type" value="mRNA"/>
</dbReference>
<dbReference type="EMBL" id="X07646">
    <property type="protein sequence ID" value="CAA30486.1"/>
    <property type="molecule type" value="mRNA"/>
</dbReference>
<dbReference type="EMBL" id="M35603">
    <property type="protein sequence ID" value="AAA37857.1"/>
    <property type="molecule type" value="Genomic_DNA"/>
</dbReference>
<dbReference type="EMBL" id="X03659">
    <property type="protein sequence ID" value="CAA27294.1"/>
    <property type="status" value="ALT_SEQ"/>
    <property type="molecule type" value="Genomic_DNA"/>
</dbReference>
<dbReference type="CCDS" id="CCDS27894.1"/>
<dbReference type="PIR" id="B25180">
    <property type="entry name" value="A25180"/>
</dbReference>
<dbReference type="PIR" id="B36023">
    <property type="entry name" value="WJMSX3"/>
</dbReference>
<dbReference type="PIR" id="S13785">
    <property type="entry name" value="S13785"/>
</dbReference>
<dbReference type="RefSeq" id="NP_034596.1">
    <property type="nucleotide sequence ID" value="NM_010466.2"/>
</dbReference>
<dbReference type="SMR" id="P09025"/>
<dbReference type="BioGRID" id="200389">
    <property type="interactions" value="3"/>
</dbReference>
<dbReference type="FunCoup" id="P09025">
    <property type="interactions" value="1378"/>
</dbReference>
<dbReference type="IntAct" id="P09025">
    <property type="interactions" value="1"/>
</dbReference>
<dbReference type="STRING" id="10090.ENSMUSP00000001703"/>
<dbReference type="iPTMnet" id="P09025"/>
<dbReference type="PhosphoSitePlus" id="P09025"/>
<dbReference type="PaxDb" id="10090-ENSMUSP00000001703"/>
<dbReference type="ProteomicsDB" id="267025"/>
<dbReference type="Antibodypedia" id="27310">
    <property type="antibodies" value="262 antibodies from 34 providers"/>
</dbReference>
<dbReference type="DNASU" id="15426"/>
<dbReference type="Ensembl" id="ENSMUST00000001703.8">
    <property type="protein sequence ID" value="ENSMUSP00000001703.7"/>
    <property type="gene ID" value="ENSMUSG00000001657.8"/>
</dbReference>
<dbReference type="GeneID" id="15426"/>
<dbReference type="KEGG" id="mmu:15426"/>
<dbReference type="UCSC" id="uc012aaf.1">
    <property type="organism name" value="mouse"/>
</dbReference>
<dbReference type="AGR" id="MGI:96198"/>
<dbReference type="CTD" id="3224"/>
<dbReference type="MGI" id="MGI:96198">
    <property type="gene designation" value="Hoxc8"/>
</dbReference>
<dbReference type="VEuPathDB" id="HostDB:ENSMUSG00000001657"/>
<dbReference type="eggNOG" id="KOG0489">
    <property type="taxonomic scope" value="Eukaryota"/>
</dbReference>
<dbReference type="GeneTree" id="ENSGT00940000161194"/>
<dbReference type="HOGENOM" id="CLU_061398_1_0_1"/>
<dbReference type="InParanoid" id="P09025"/>
<dbReference type="OMA" id="PSIMFPW"/>
<dbReference type="OrthoDB" id="6159439at2759"/>
<dbReference type="PhylomeDB" id="P09025"/>
<dbReference type="TreeFam" id="TF316310"/>
<dbReference type="Reactome" id="R-MMU-9762293">
    <property type="pathway name" value="Regulation of CDH11 gene transcription"/>
</dbReference>
<dbReference type="BioGRID-ORCS" id="15426">
    <property type="hits" value="2 hits in 79 CRISPR screens"/>
</dbReference>
<dbReference type="PRO" id="PR:P09025"/>
<dbReference type="Proteomes" id="UP000000589">
    <property type="component" value="Chromosome 15"/>
</dbReference>
<dbReference type="RNAct" id="P09025">
    <property type="molecule type" value="protein"/>
</dbReference>
<dbReference type="Bgee" id="ENSMUSG00000001657">
    <property type="expression patterns" value="Expressed in epididymis and 141 other cell types or tissues"/>
</dbReference>
<dbReference type="GO" id="GO:0015630">
    <property type="term" value="C:microtubule cytoskeleton"/>
    <property type="evidence" value="ECO:0007669"/>
    <property type="project" value="Ensembl"/>
</dbReference>
<dbReference type="GO" id="GO:0005654">
    <property type="term" value="C:nucleoplasm"/>
    <property type="evidence" value="ECO:0007669"/>
    <property type="project" value="Ensembl"/>
</dbReference>
<dbReference type="GO" id="GO:0005634">
    <property type="term" value="C:nucleus"/>
    <property type="evidence" value="ECO:0000314"/>
    <property type="project" value="MGI"/>
</dbReference>
<dbReference type="GO" id="GO:0003677">
    <property type="term" value="F:DNA binding"/>
    <property type="evidence" value="ECO:0000314"/>
    <property type="project" value="MGI"/>
</dbReference>
<dbReference type="GO" id="GO:0000981">
    <property type="term" value="F:DNA-binding transcription factor activity, RNA polymerase II-specific"/>
    <property type="evidence" value="ECO:0007669"/>
    <property type="project" value="InterPro"/>
</dbReference>
<dbReference type="GO" id="GO:1990837">
    <property type="term" value="F:sequence-specific double-stranded DNA binding"/>
    <property type="evidence" value="ECO:0007669"/>
    <property type="project" value="Ensembl"/>
</dbReference>
<dbReference type="GO" id="GO:0009952">
    <property type="term" value="P:anterior/posterior pattern specification"/>
    <property type="evidence" value="ECO:0000315"/>
    <property type="project" value="MGI"/>
</dbReference>
<dbReference type="GO" id="GO:0000122">
    <property type="term" value="P:negative regulation of transcription by RNA polymerase II"/>
    <property type="evidence" value="ECO:0000314"/>
    <property type="project" value="MGI"/>
</dbReference>
<dbReference type="GO" id="GO:0030182">
    <property type="term" value="P:neuron differentiation"/>
    <property type="evidence" value="ECO:0000315"/>
    <property type="project" value="MGI"/>
</dbReference>
<dbReference type="GO" id="GO:0048705">
    <property type="term" value="P:skeletal system morphogenesis"/>
    <property type="evidence" value="ECO:0000315"/>
    <property type="project" value="MGI"/>
</dbReference>
<dbReference type="CDD" id="cd00086">
    <property type="entry name" value="homeodomain"/>
    <property type="match status" value="1"/>
</dbReference>
<dbReference type="FunFam" id="1.10.10.60:FF:000072">
    <property type="entry name" value="Homeobox protein Hox-B8"/>
    <property type="match status" value="1"/>
</dbReference>
<dbReference type="Gene3D" id="1.10.10.60">
    <property type="entry name" value="Homeodomain-like"/>
    <property type="match status" value="1"/>
</dbReference>
<dbReference type="InterPro" id="IPR050948">
    <property type="entry name" value="Antp_homeobox_TF"/>
</dbReference>
<dbReference type="InterPro" id="IPR001356">
    <property type="entry name" value="HD"/>
</dbReference>
<dbReference type="InterPro" id="IPR020479">
    <property type="entry name" value="HD_metazoa"/>
</dbReference>
<dbReference type="InterPro" id="IPR001827">
    <property type="entry name" value="Homeobox_Antennapedia_CS"/>
</dbReference>
<dbReference type="InterPro" id="IPR017970">
    <property type="entry name" value="Homeobox_CS"/>
</dbReference>
<dbReference type="InterPro" id="IPR009057">
    <property type="entry name" value="Homeodomain-like_sf"/>
</dbReference>
<dbReference type="InterPro" id="IPR000047">
    <property type="entry name" value="HTH_motif"/>
</dbReference>
<dbReference type="PANTHER" id="PTHR46166">
    <property type="entry name" value="HOMEOBOX DOMAIN-CONTAINING PROTEIN"/>
    <property type="match status" value="1"/>
</dbReference>
<dbReference type="PANTHER" id="PTHR46166:SF4">
    <property type="entry name" value="HOMEOBOX PROTEIN HOX-C8"/>
    <property type="match status" value="1"/>
</dbReference>
<dbReference type="Pfam" id="PF00046">
    <property type="entry name" value="Homeodomain"/>
    <property type="match status" value="1"/>
</dbReference>
<dbReference type="PRINTS" id="PR00024">
    <property type="entry name" value="HOMEOBOX"/>
</dbReference>
<dbReference type="PRINTS" id="PR00031">
    <property type="entry name" value="HTHREPRESSR"/>
</dbReference>
<dbReference type="SMART" id="SM00389">
    <property type="entry name" value="HOX"/>
    <property type="match status" value="1"/>
</dbReference>
<dbReference type="SUPFAM" id="SSF46689">
    <property type="entry name" value="Homeodomain-like"/>
    <property type="match status" value="1"/>
</dbReference>
<dbReference type="PROSITE" id="PS00032">
    <property type="entry name" value="ANTENNAPEDIA"/>
    <property type="match status" value="1"/>
</dbReference>
<dbReference type="PROSITE" id="PS00027">
    <property type="entry name" value="HOMEOBOX_1"/>
    <property type="match status" value="1"/>
</dbReference>
<dbReference type="PROSITE" id="PS50071">
    <property type="entry name" value="HOMEOBOX_2"/>
    <property type="match status" value="1"/>
</dbReference>